<proteinExistence type="evidence at transcript level"/>
<sequence length="878" mass="98681">METSSSLPLSPISIEPEQPSHRDYDITTRRGVGTTGNPIELCTNHFNVSVRQPDVVFYQYTVSITTENGDAVDGTGISRKLMDQLFKTYSSDLDGKRLAYDGEKTLYTVGPLPQNEFDFLVIVEGSFSKRDCGVSDGGSSSGTCKRSKRSFLPRSYKVQIHYAAEIPLKTVLGTQRGAYTPDKSAQDALRVLDIVLRQQAAERGCLLVRQAFFHSDGHPMKVGGGVIGIRGLHSSFRPTHGGLSLNIDVSTTMILEPGPVIEFLKANQSVETPRQIDWIKAAKMLKHMRVKATHRNMEFKIIGLSSKPCNQQLFSMKIKDGEREVPIREITVYDYFKQTYTEPISSAYFPCLDVGKPDRPNYLPLEFCNLVSLQRYTKPLSGRQRVLLVESSRQKPLERIKTLNDAMHTYCYDKDPFLAGCGISIEKEMTQVEGRVLKPPMLKFGKNEDFQPCNGRWNFNNKMLLEPRAIKSWAIVNFSFPCDSSHISRELISCGMRKGIEIDRPFALVEEDPQYKKAGPVERVEKMIATMKLKFPDPPHFILCILPERKTSDIYGPWKKICLTEEGIHTQCICPIKISDQYLTNVLLKINSKLGGINSLLGIEYSYNIPLINKIPTLILGMDVSHGPPGRADVPSVAAVVGSKCWPLISRYRAAVRTQSPRLEMIDSLFQPIENTEKGDNGIMNELFVEFYRTSRARKPKQIIIFRDGVSESQFEQVLKIEVDQIIKAYQRLGESDVPKFTVIVAQKNHHTKLFQAKGPENVPAGTVVDTKIVHPTNYDFYMCAHAGKIGTSRPAHYHVLLDEIGFSPDDLQNLIHSLSYVNQRSTTATSIVAPVRYAHLAAAQVAQFTKFEGISEDGKVPELPRLHENVEGNMFFC</sequence>
<accession>O48771</accession>
<dbReference type="EMBL" id="AC003033">
    <property type="protein sequence ID" value="AAB91987.1"/>
    <property type="status" value="ALT_SEQ"/>
    <property type="molecule type" value="Genomic_DNA"/>
</dbReference>
<dbReference type="EMBL" id="CP002685">
    <property type="protein sequence ID" value="AEC08765.1"/>
    <property type="molecule type" value="Genomic_DNA"/>
</dbReference>
<dbReference type="PIR" id="T01113">
    <property type="entry name" value="T01113"/>
</dbReference>
<dbReference type="RefSeq" id="NP_180853.2">
    <property type="nucleotide sequence ID" value="NM_128854.4"/>
</dbReference>
<dbReference type="SMR" id="O48771"/>
<dbReference type="FunCoup" id="O48771">
    <property type="interactions" value="67"/>
</dbReference>
<dbReference type="STRING" id="3702.O48771"/>
<dbReference type="iPTMnet" id="O48771"/>
<dbReference type="PaxDb" id="3702-AT2G32940.1"/>
<dbReference type="ProteomicsDB" id="244721"/>
<dbReference type="EnsemblPlants" id="AT2G32940.1">
    <property type="protein sequence ID" value="AT2G32940.1"/>
    <property type="gene ID" value="AT2G32940"/>
</dbReference>
<dbReference type="GeneID" id="817856"/>
<dbReference type="Gramene" id="AT2G32940.1">
    <property type="protein sequence ID" value="AT2G32940.1"/>
    <property type="gene ID" value="AT2G32940"/>
</dbReference>
<dbReference type="KEGG" id="ath:AT2G32940"/>
<dbReference type="Araport" id="AT2G32940"/>
<dbReference type="TAIR" id="AT2G32940">
    <property type="gene designation" value="AGO6"/>
</dbReference>
<dbReference type="eggNOG" id="KOG1041">
    <property type="taxonomic scope" value="Eukaryota"/>
</dbReference>
<dbReference type="HOGENOM" id="CLU_004544_2_0_1"/>
<dbReference type="InParanoid" id="O48771"/>
<dbReference type="OMA" id="MNDQYYT"/>
<dbReference type="PhylomeDB" id="O48771"/>
<dbReference type="PRO" id="PR:O48771"/>
<dbReference type="Proteomes" id="UP000006548">
    <property type="component" value="Chromosome 2"/>
</dbReference>
<dbReference type="ExpressionAtlas" id="O48771">
    <property type="expression patterns" value="baseline and differential"/>
</dbReference>
<dbReference type="GO" id="GO:0005634">
    <property type="term" value="C:nucleus"/>
    <property type="evidence" value="ECO:0000314"/>
    <property type="project" value="TAIR"/>
</dbReference>
<dbReference type="GO" id="GO:1990904">
    <property type="term" value="C:ribonucleoprotein complex"/>
    <property type="evidence" value="ECO:0007669"/>
    <property type="project" value="UniProtKB-KW"/>
</dbReference>
<dbReference type="GO" id="GO:0035197">
    <property type="term" value="F:siRNA binding"/>
    <property type="evidence" value="ECO:0000314"/>
    <property type="project" value="TAIR"/>
</dbReference>
<dbReference type="GO" id="GO:0051607">
    <property type="term" value="P:defense response to virus"/>
    <property type="evidence" value="ECO:0000314"/>
    <property type="project" value="TAIR"/>
</dbReference>
<dbReference type="GO" id="GO:0080188">
    <property type="term" value="P:gene silencing by siRNA-directed DNA methylation"/>
    <property type="evidence" value="ECO:0000315"/>
    <property type="project" value="FlyBase"/>
</dbReference>
<dbReference type="GO" id="GO:0006417">
    <property type="term" value="P:regulation of translation"/>
    <property type="evidence" value="ECO:0007669"/>
    <property type="project" value="UniProtKB-KW"/>
</dbReference>
<dbReference type="GO" id="GO:0030422">
    <property type="term" value="P:siRNA processing"/>
    <property type="evidence" value="ECO:0000315"/>
    <property type="project" value="TAIR"/>
</dbReference>
<dbReference type="CDD" id="cd02846">
    <property type="entry name" value="PAZ_argonaute_like"/>
    <property type="match status" value="1"/>
</dbReference>
<dbReference type="CDD" id="cd04657">
    <property type="entry name" value="Piwi_ago-like"/>
    <property type="match status" value="1"/>
</dbReference>
<dbReference type="FunFam" id="3.30.420.10:FF:000091">
    <property type="entry name" value="Protein argonaute 3"/>
    <property type="match status" value="1"/>
</dbReference>
<dbReference type="FunFam" id="2.170.260.10:FF:000008">
    <property type="entry name" value="Protein argonaute 7"/>
    <property type="match status" value="1"/>
</dbReference>
<dbReference type="Gene3D" id="3.40.50.2300">
    <property type="match status" value="1"/>
</dbReference>
<dbReference type="Gene3D" id="2.170.260.10">
    <property type="entry name" value="paz domain"/>
    <property type="match status" value="1"/>
</dbReference>
<dbReference type="Gene3D" id="3.30.420.10">
    <property type="entry name" value="Ribonuclease H-like superfamily/Ribonuclease H"/>
    <property type="match status" value="1"/>
</dbReference>
<dbReference type="InterPro" id="IPR014811">
    <property type="entry name" value="ArgoL1"/>
</dbReference>
<dbReference type="InterPro" id="IPR032472">
    <property type="entry name" value="ArgoL2"/>
</dbReference>
<dbReference type="InterPro" id="IPR032474">
    <property type="entry name" value="Argonaute_N"/>
</dbReference>
<dbReference type="InterPro" id="IPR003100">
    <property type="entry name" value="PAZ_dom"/>
</dbReference>
<dbReference type="InterPro" id="IPR036085">
    <property type="entry name" value="PAZ_dom_sf"/>
</dbReference>
<dbReference type="InterPro" id="IPR003165">
    <property type="entry name" value="Piwi"/>
</dbReference>
<dbReference type="InterPro" id="IPR045246">
    <property type="entry name" value="Piwi_ago-like"/>
</dbReference>
<dbReference type="InterPro" id="IPR012337">
    <property type="entry name" value="RNaseH-like_sf"/>
</dbReference>
<dbReference type="InterPro" id="IPR036397">
    <property type="entry name" value="RNaseH_sf"/>
</dbReference>
<dbReference type="PANTHER" id="PTHR22891">
    <property type="entry name" value="EUKARYOTIC TRANSLATION INITIATION FACTOR 2C"/>
    <property type="match status" value="1"/>
</dbReference>
<dbReference type="Pfam" id="PF08699">
    <property type="entry name" value="ArgoL1"/>
    <property type="match status" value="1"/>
</dbReference>
<dbReference type="Pfam" id="PF16488">
    <property type="entry name" value="ArgoL2"/>
    <property type="match status" value="1"/>
</dbReference>
<dbReference type="Pfam" id="PF16486">
    <property type="entry name" value="ArgoN"/>
    <property type="match status" value="1"/>
</dbReference>
<dbReference type="Pfam" id="PF02170">
    <property type="entry name" value="PAZ"/>
    <property type="match status" value="1"/>
</dbReference>
<dbReference type="Pfam" id="PF02171">
    <property type="entry name" value="Piwi"/>
    <property type="match status" value="1"/>
</dbReference>
<dbReference type="SMART" id="SM01163">
    <property type="entry name" value="DUF1785"/>
    <property type="match status" value="1"/>
</dbReference>
<dbReference type="SMART" id="SM00950">
    <property type="entry name" value="Piwi"/>
    <property type="match status" value="1"/>
</dbReference>
<dbReference type="SUPFAM" id="SSF101690">
    <property type="entry name" value="PAZ domain"/>
    <property type="match status" value="1"/>
</dbReference>
<dbReference type="SUPFAM" id="SSF53098">
    <property type="entry name" value="Ribonuclease H-like"/>
    <property type="match status" value="1"/>
</dbReference>
<dbReference type="PROSITE" id="PS50821">
    <property type="entry name" value="PAZ"/>
    <property type="match status" value="1"/>
</dbReference>
<dbReference type="PROSITE" id="PS50822">
    <property type="entry name" value="PIWI"/>
    <property type="match status" value="1"/>
</dbReference>
<comment type="function">
    <text evidence="4 5 6">Involved in transcriptional gene silencing (TGS). Component of the RISC complex that associate with the small interfering RNA (siRNA) pathway involved in direct cytosine methylation at endogenous DNA repeats. Required for the accumulation of specific siRNAs derived from transgene and heterochromatin-related endogenous loci. Involved in RNA-directed DNA methylation (RdDM) at specific endogenous loci. Probably not required for the accumulation of siRNAs derived from transgene inverted repeats that induce post-transcriptional gene silencing (PTGS). Associates mainly with small RNAs of 24 nucleotide in length and preferentially recruits small RNAs with a 5' terminal adenosine. Targeted by turnip yellows virus (TuYV) protein P0 (via F-box-like domain) for probable proteasome degradation and thereby inactivating AGO6 function in RNA silencing.</text>
</comment>
<comment type="subcellular location">
    <subcellularLocation>
        <location evidence="4">Nucleus</location>
    </subcellularLocation>
</comment>
<comment type="tissue specificity">
    <text evidence="4 6">Expressed in roots, cotyledons and shoot meristematic region.</text>
</comment>
<comment type="similarity">
    <text evidence="7">Belongs to the argonaute family. Ago subfamily.</text>
</comment>
<comment type="sequence caution" evidence="7">
    <conflict type="erroneous gene model prediction">
        <sequence resource="EMBL-CDS" id="AAB91987"/>
    </conflict>
</comment>
<keyword id="KW-0539">Nucleus</keyword>
<keyword id="KW-0611">Plant defense</keyword>
<keyword id="KW-1185">Reference proteome</keyword>
<keyword id="KW-0678">Repressor</keyword>
<keyword id="KW-0687">Ribonucleoprotein</keyword>
<keyword id="KW-0694">RNA-binding</keyword>
<keyword id="KW-0943">RNA-mediated gene silencing</keyword>
<keyword id="KW-0804">Transcription</keyword>
<keyword id="KW-0805">Transcription regulation</keyword>
<keyword id="KW-0810">Translation regulation</keyword>
<evidence type="ECO:0000255" key="1">
    <source>
        <dbReference type="PROSITE-ProRule" id="PRU00142"/>
    </source>
</evidence>
<evidence type="ECO:0000255" key="2">
    <source>
        <dbReference type="PROSITE-ProRule" id="PRU00150"/>
    </source>
</evidence>
<evidence type="ECO:0000256" key="3">
    <source>
        <dbReference type="SAM" id="MobiDB-lite"/>
    </source>
</evidence>
<evidence type="ECO:0000269" key="4">
    <source>
    </source>
</evidence>
<evidence type="ECO:0000269" key="5">
    <source>
    </source>
</evidence>
<evidence type="ECO:0000269" key="6">
    <source>
    </source>
</evidence>
<evidence type="ECO:0000305" key="7"/>
<feature type="chain" id="PRO_0000404668" description="Protein argonaute 6">
    <location>
        <begin position="1"/>
        <end position="878"/>
    </location>
</feature>
<feature type="domain" description="PAZ" evidence="1">
    <location>
        <begin position="259"/>
        <end position="372"/>
    </location>
</feature>
<feature type="domain" description="Piwi" evidence="2">
    <location>
        <begin position="541"/>
        <end position="851"/>
    </location>
</feature>
<feature type="region of interest" description="Disordered" evidence="3">
    <location>
        <begin position="1"/>
        <end position="25"/>
    </location>
</feature>
<feature type="compositionally biased region" description="Low complexity" evidence="3">
    <location>
        <begin position="1"/>
        <end position="17"/>
    </location>
</feature>
<name>AGO6_ARATH</name>
<reference key="1">
    <citation type="journal article" date="1999" name="Nature">
        <title>Sequence and analysis of chromosome 2 of the plant Arabidopsis thaliana.</title>
        <authorList>
            <person name="Lin X."/>
            <person name="Kaul S."/>
            <person name="Rounsley S.D."/>
            <person name="Shea T.P."/>
            <person name="Benito M.-I."/>
            <person name="Town C.D."/>
            <person name="Fujii C.Y."/>
            <person name="Mason T.M."/>
            <person name="Bowman C.L."/>
            <person name="Barnstead M.E."/>
            <person name="Feldblyum T.V."/>
            <person name="Buell C.R."/>
            <person name="Ketchum K.A."/>
            <person name="Lee J.J."/>
            <person name="Ronning C.M."/>
            <person name="Koo H.L."/>
            <person name="Moffat K.S."/>
            <person name="Cronin L.A."/>
            <person name="Shen M."/>
            <person name="Pai G."/>
            <person name="Van Aken S."/>
            <person name="Umayam L."/>
            <person name="Tallon L.J."/>
            <person name="Gill J.E."/>
            <person name="Adams M.D."/>
            <person name="Carrera A.J."/>
            <person name="Creasy T.H."/>
            <person name="Goodman H.M."/>
            <person name="Somerville C.R."/>
            <person name="Copenhaver G.P."/>
            <person name="Preuss D."/>
            <person name="Nierman W.C."/>
            <person name="White O."/>
            <person name="Eisen J.A."/>
            <person name="Salzberg S.L."/>
            <person name="Fraser C.M."/>
            <person name="Venter J.C."/>
        </authorList>
    </citation>
    <scope>NUCLEOTIDE SEQUENCE [LARGE SCALE GENOMIC DNA]</scope>
    <source>
        <strain>cv. Columbia</strain>
    </source>
</reference>
<reference key="2">
    <citation type="journal article" date="2017" name="Plant J.">
        <title>Araport11: a complete reannotation of the Arabidopsis thaliana reference genome.</title>
        <authorList>
            <person name="Cheng C.Y."/>
            <person name="Krishnakumar V."/>
            <person name="Chan A.P."/>
            <person name="Thibaud-Nissen F."/>
            <person name="Schobel S."/>
            <person name="Town C.D."/>
        </authorList>
    </citation>
    <scope>GENOME REANNOTATION</scope>
    <source>
        <strain>cv. Columbia</strain>
    </source>
</reference>
<reference key="3">
    <citation type="journal article" date="2007" name="Curr. Biol.">
        <title>The Polerovirus silencing suppressor P0 targets ARGONAUTE proteins for degradation.</title>
        <authorList>
            <person name="Baumberger N."/>
            <person name="Tsai C.-H."/>
            <person name="Lie M."/>
            <person name="Havecker E."/>
            <person name="Baulcombe D.C."/>
        </authorList>
    </citation>
    <scope>FUNCTION</scope>
</reference>
<reference key="4">
    <citation type="journal article" date="2007" name="EMBO J.">
        <title>Role of Arabidopsis AGO6 in siRNA accumulation, DNA methylation and transcriptional gene silencing.</title>
        <authorList>
            <person name="Zheng X."/>
            <person name="Zhu J."/>
            <person name="Kapoor A."/>
            <person name="Zhu J.K."/>
        </authorList>
    </citation>
    <scope>FUNCTION</scope>
    <scope>SUBCELLULAR LOCATION</scope>
    <scope>TISSUE SPECIFICITY</scope>
</reference>
<reference key="5">
    <citation type="journal article" date="2010" name="Plant Cell">
        <title>The Arabidopsis RNA-directed DNA methylation argonautes functionally diverge based on their expression and interaction with target loci.</title>
        <authorList>
            <person name="Havecker E.R."/>
            <person name="Wallbridge L.M."/>
            <person name="Hardcastle T.J."/>
            <person name="Bush M.S."/>
            <person name="Kelly K.A."/>
            <person name="Dunn R.M."/>
            <person name="Schwach F."/>
            <person name="Doonan J.H."/>
            <person name="Baulcombe D.C."/>
        </authorList>
    </citation>
    <scope>FUNCTION</scope>
    <scope>TISSUE SPECIFICITY</scope>
</reference>
<protein>
    <recommendedName>
        <fullName>Protein argonaute 6</fullName>
    </recommendedName>
</protein>
<organism>
    <name type="scientific">Arabidopsis thaliana</name>
    <name type="common">Mouse-ear cress</name>
    <dbReference type="NCBI Taxonomy" id="3702"/>
    <lineage>
        <taxon>Eukaryota</taxon>
        <taxon>Viridiplantae</taxon>
        <taxon>Streptophyta</taxon>
        <taxon>Embryophyta</taxon>
        <taxon>Tracheophyta</taxon>
        <taxon>Spermatophyta</taxon>
        <taxon>Magnoliopsida</taxon>
        <taxon>eudicotyledons</taxon>
        <taxon>Gunneridae</taxon>
        <taxon>Pentapetalae</taxon>
        <taxon>rosids</taxon>
        <taxon>malvids</taxon>
        <taxon>Brassicales</taxon>
        <taxon>Brassicaceae</taxon>
        <taxon>Camelineae</taxon>
        <taxon>Arabidopsis</taxon>
    </lineage>
</organism>
<gene>
    <name type="primary">AGO6</name>
    <name type="ordered locus">At2g32940</name>
    <name type="ORF">T21L14.12</name>
</gene>